<keyword id="KW-0378">Hydrolase</keyword>
<keyword id="KW-0479">Metal-binding</keyword>
<keyword id="KW-1185">Reference proteome</keyword>
<keyword id="KW-0862">Zinc</keyword>
<name>YHFI_BACSU</name>
<accession>O07607</accession>
<accession>Q796U2</accession>
<evidence type="ECO:0000250" key="1"/>
<evidence type="ECO:0000305" key="2"/>
<protein>
    <recommendedName>
        <fullName>Probable metallo-hydrolase YhfI</fullName>
        <ecNumber>3.-.-.-</ecNumber>
    </recommendedName>
</protein>
<feature type="chain" id="PRO_0000387991" description="Probable metallo-hydrolase YhfI">
    <location>
        <begin position="1"/>
        <end position="244"/>
    </location>
</feature>
<feature type="binding site" evidence="1">
    <location>
        <position position="59"/>
    </location>
    <ligand>
        <name>Zn(2+)</name>
        <dbReference type="ChEBI" id="CHEBI:29105"/>
        <label>1</label>
    </ligand>
</feature>
<feature type="binding site" evidence="1">
    <location>
        <position position="61"/>
    </location>
    <ligand>
        <name>Zn(2+)</name>
        <dbReference type="ChEBI" id="CHEBI:29105"/>
        <label>1</label>
    </ligand>
</feature>
<feature type="binding site" evidence="1">
    <location>
        <position position="63"/>
    </location>
    <ligand>
        <name>Zn(2+)</name>
        <dbReference type="ChEBI" id="CHEBI:29105"/>
        <label>2</label>
    </ligand>
</feature>
<feature type="binding site" evidence="1">
    <location>
        <position position="64"/>
    </location>
    <ligand>
        <name>Zn(2+)</name>
        <dbReference type="ChEBI" id="CHEBI:29105"/>
        <label>2</label>
    </ligand>
</feature>
<feature type="binding site" evidence="1">
    <location>
        <position position="134"/>
    </location>
    <ligand>
        <name>Zn(2+)</name>
        <dbReference type="ChEBI" id="CHEBI:29105"/>
        <label>1</label>
    </ligand>
</feature>
<feature type="binding site" evidence="1">
    <location>
        <position position="155"/>
    </location>
    <ligand>
        <name>Zn(2+)</name>
        <dbReference type="ChEBI" id="CHEBI:29105"/>
        <label>1</label>
    </ligand>
</feature>
<feature type="binding site" evidence="1">
    <location>
        <position position="155"/>
    </location>
    <ligand>
        <name>Zn(2+)</name>
        <dbReference type="ChEBI" id="CHEBI:29105"/>
        <label>2</label>
    </ligand>
</feature>
<feature type="binding site" evidence="1">
    <location>
        <position position="211"/>
    </location>
    <ligand>
        <name>Zn(2+)</name>
        <dbReference type="ChEBI" id="CHEBI:29105"/>
        <label>2</label>
    </ligand>
</feature>
<dbReference type="EC" id="3.-.-.-"/>
<dbReference type="EMBL" id="Y14083">
    <property type="protein sequence ID" value="CAA74530.1"/>
    <property type="molecule type" value="Genomic_DNA"/>
</dbReference>
<dbReference type="EMBL" id="AL009126">
    <property type="protein sequence ID" value="CAB12864.1"/>
    <property type="molecule type" value="Genomic_DNA"/>
</dbReference>
<dbReference type="PIR" id="F69830">
    <property type="entry name" value="F69830"/>
</dbReference>
<dbReference type="RefSeq" id="NP_388905.1">
    <property type="nucleotide sequence ID" value="NC_000964.3"/>
</dbReference>
<dbReference type="RefSeq" id="WP_003233185.1">
    <property type="nucleotide sequence ID" value="NZ_OZ025638.1"/>
</dbReference>
<dbReference type="SMR" id="O07607"/>
<dbReference type="FunCoup" id="O07607">
    <property type="interactions" value="50"/>
</dbReference>
<dbReference type="STRING" id="224308.BSU10240"/>
<dbReference type="jPOST" id="O07607"/>
<dbReference type="PaxDb" id="224308-BSU10240"/>
<dbReference type="EnsemblBacteria" id="CAB12864">
    <property type="protein sequence ID" value="CAB12864"/>
    <property type="gene ID" value="BSU_10240"/>
</dbReference>
<dbReference type="GeneID" id="936318"/>
<dbReference type="KEGG" id="bsu:BSU10240"/>
<dbReference type="PATRIC" id="fig|224308.179.peg.1100"/>
<dbReference type="eggNOG" id="COG1234">
    <property type="taxonomic scope" value="Bacteria"/>
</dbReference>
<dbReference type="InParanoid" id="O07607"/>
<dbReference type="OrthoDB" id="9794898at2"/>
<dbReference type="PhylomeDB" id="O07607"/>
<dbReference type="BioCyc" id="BSUB:BSU10240-MONOMER"/>
<dbReference type="Proteomes" id="UP000001570">
    <property type="component" value="Chromosome"/>
</dbReference>
<dbReference type="GO" id="GO:0042781">
    <property type="term" value="F:3'-tRNA processing endoribonuclease activity"/>
    <property type="evidence" value="ECO:0000318"/>
    <property type="project" value="GO_Central"/>
</dbReference>
<dbReference type="GO" id="GO:0046872">
    <property type="term" value="F:metal ion binding"/>
    <property type="evidence" value="ECO:0007669"/>
    <property type="project" value="UniProtKB-KW"/>
</dbReference>
<dbReference type="CDD" id="cd07716">
    <property type="entry name" value="RNaseZ_short-form-like_MBL-fold"/>
    <property type="match status" value="1"/>
</dbReference>
<dbReference type="Gene3D" id="3.60.15.10">
    <property type="entry name" value="Ribonuclease Z/Hydroxyacylglutathione hydrolase-like"/>
    <property type="match status" value="1"/>
</dbReference>
<dbReference type="InterPro" id="IPR001279">
    <property type="entry name" value="Metallo-B-lactamas"/>
</dbReference>
<dbReference type="InterPro" id="IPR036866">
    <property type="entry name" value="RibonucZ/Hydroxyglut_hydro"/>
</dbReference>
<dbReference type="PANTHER" id="PTHR46018:SF4">
    <property type="entry name" value="METALLO-HYDROLASE YHFI-RELATED"/>
    <property type="match status" value="1"/>
</dbReference>
<dbReference type="PANTHER" id="PTHR46018">
    <property type="entry name" value="ZINC PHOSPHODIESTERASE ELAC PROTEIN 1"/>
    <property type="match status" value="1"/>
</dbReference>
<dbReference type="Pfam" id="PF00753">
    <property type="entry name" value="Lactamase_B"/>
    <property type="match status" value="1"/>
</dbReference>
<dbReference type="SMART" id="SM00849">
    <property type="entry name" value="Lactamase_B"/>
    <property type="match status" value="1"/>
</dbReference>
<dbReference type="SUPFAM" id="SSF56281">
    <property type="entry name" value="Metallo-hydrolase/oxidoreductase"/>
    <property type="match status" value="1"/>
</dbReference>
<organism>
    <name type="scientific">Bacillus subtilis (strain 168)</name>
    <dbReference type="NCBI Taxonomy" id="224308"/>
    <lineage>
        <taxon>Bacteria</taxon>
        <taxon>Bacillati</taxon>
        <taxon>Bacillota</taxon>
        <taxon>Bacilli</taxon>
        <taxon>Bacillales</taxon>
        <taxon>Bacillaceae</taxon>
        <taxon>Bacillus</taxon>
    </lineage>
</organism>
<proteinExistence type="inferred from homology"/>
<reference key="1">
    <citation type="journal article" date="1998" name="Microbiology">
        <title>The 172 kb prkA-addAB region from 83 degrees to 97 degrees of the Bacillus subtilis chromosome contains several dysfunctional genes, the glyB marker, many genes encoding transporter proteins, and the ubiquitous hit gene.</title>
        <authorList>
            <person name="Noback M.A."/>
            <person name="Holsappel S."/>
            <person name="Kiewiet R."/>
            <person name="Terpstra P."/>
            <person name="Wambutt R."/>
            <person name="Wedler H."/>
            <person name="Venema G."/>
            <person name="Bron S."/>
        </authorList>
    </citation>
    <scope>NUCLEOTIDE SEQUENCE [GENOMIC DNA]</scope>
    <source>
        <strain>168</strain>
    </source>
</reference>
<reference key="2">
    <citation type="journal article" date="1997" name="Nature">
        <title>The complete genome sequence of the Gram-positive bacterium Bacillus subtilis.</title>
        <authorList>
            <person name="Kunst F."/>
            <person name="Ogasawara N."/>
            <person name="Moszer I."/>
            <person name="Albertini A.M."/>
            <person name="Alloni G."/>
            <person name="Azevedo V."/>
            <person name="Bertero M.G."/>
            <person name="Bessieres P."/>
            <person name="Bolotin A."/>
            <person name="Borchert S."/>
            <person name="Borriss R."/>
            <person name="Boursier L."/>
            <person name="Brans A."/>
            <person name="Braun M."/>
            <person name="Brignell S.C."/>
            <person name="Bron S."/>
            <person name="Brouillet S."/>
            <person name="Bruschi C.V."/>
            <person name="Caldwell B."/>
            <person name="Capuano V."/>
            <person name="Carter N.M."/>
            <person name="Choi S.-K."/>
            <person name="Codani J.-J."/>
            <person name="Connerton I.F."/>
            <person name="Cummings N.J."/>
            <person name="Daniel R.A."/>
            <person name="Denizot F."/>
            <person name="Devine K.M."/>
            <person name="Duesterhoeft A."/>
            <person name="Ehrlich S.D."/>
            <person name="Emmerson P.T."/>
            <person name="Entian K.-D."/>
            <person name="Errington J."/>
            <person name="Fabret C."/>
            <person name="Ferrari E."/>
            <person name="Foulger D."/>
            <person name="Fritz C."/>
            <person name="Fujita M."/>
            <person name="Fujita Y."/>
            <person name="Fuma S."/>
            <person name="Galizzi A."/>
            <person name="Galleron N."/>
            <person name="Ghim S.-Y."/>
            <person name="Glaser P."/>
            <person name="Goffeau A."/>
            <person name="Golightly E.J."/>
            <person name="Grandi G."/>
            <person name="Guiseppi G."/>
            <person name="Guy B.J."/>
            <person name="Haga K."/>
            <person name="Haiech J."/>
            <person name="Harwood C.R."/>
            <person name="Henaut A."/>
            <person name="Hilbert H."/>
            <person name="Holsappel S."/>
            <person name="Hosono S."/>
            <person name="Hullo M.-F."/>
            <person name="Itaya M."/>
            <person name="Jones L.-M."/>
            <person name="Joris B."/>
            <person name="Karamata D."/>
            <person name="Kasahara Y."/>
            <person name="Klaerr-Blanchard M."/>
            <person name="Klein C."/>
            <person name="Kobayashi Y."/>
            <person name="Koetter P."/>
            <person name="Koningstein G."/>
            <person name="Krogh S."/>
            <person name="Kumano M."/>
            <person name="Kurita K."/>
            <person name="Lapidus A."/>
            <person name="Lardinois S."/>
            <person name="Lauber J."/>
            <person name="Lazarevic V."/>
            <person name="Lee S.-M."/>
            <person name="Levine A."/>
            <person name="Liu H."/>
            <person name="Masuda S."/>
            <person name="Mauel C."/>
            <person name="Medigue C."/>
            <person name="Medina N."/>
            <person name="Mellado R.P."/>
            <person name="Mizuno M."/>
            <person name="Moestl D."/>
            <person name="Nakai S."/>
            <person name="Noback M."/>
            <person name="Noone D."/>
            <person name="O'Reilly M."/>
            <person name="Ogawa K."/>
            <person name="Ogiwara A."/>
            <person name="Oudega B."/>
            <person name="Park S.-H."/>
            <person name="Parro V."/>
            <person name="Pohl T.M."/>
            <person name="Portetelle D."/>
            <person name="Porwollik S."/>
            <person name="Prescott A.M."/>
            <person name="Presecan E."/>
            <person name="Pujic P."/>
            <person name="Purnelle B."/>
            <person name="Rapoport G."/>
            <person name="Rey M."/>
            <person name="Reynolds S."/>
            <person name="Rieger M."/>
            <person name="Rivolta C."/>
            <person name="Rocha E."/>
            <person name="Roche B."/>
            <person name="Rose M."/>
            <person name="Sadaie Y."/>
            <person name="Sato T."/>
            <person name="Scanlan E."/>
            <person name="Schleich S."/>
            <person name="Schroeter R."/>
            <person name="Scoffone F."/>
            <person name="Sekiguchi J."/>
            <person name="Sekowska A."/>
            <person name="Seror S.J."/>
            <person name="Serror P."/>
            <person name="Shin B.-S."/>
            <person name="Soldo B."/>
            <person name="Sorokin A."/>
            <person name="Tacconi E."/>
            <person name="Takagi T."/>
            <person name="Takahashi H."/>
            <person name="Takemaru K."/>
            <person name="Takeuchi M."/>
            <person name="Tamakoshi A."/>
            <person name="Tanaka T."/>
            <person name="Terpstra P."/>
            <person name="Tognoni A."/>
            <person name="Tosato V."/>
            <person name="Uchiyama S."/>
            <person name="Vandenbol M."/>
            <person name="Vannier F."/>
            <person name="Vassarotti A."/>
            <person name="Viari A."/>
            <person name="Wambutt R."/>
            <person name="Wedler E."/>
            <person name="Wedler H."/>
            <person name="Weitzenegger T."/>
            <person name="Winters P."/>
            <person name="Wipat A."/>
            <person name="Yamamoto H."/>
            <person name="Yamane K."/>
            <person name="Yasumoto K."/>
            <person name="Yata K."/>
            <person name="Yoshida K."/>
            <person name="Yoshikawa H.-F."/>
            <person name="Zumstein E."/>
            <person name="Yoshikawa H."/>
            <person name="Danchin A."/>
        </authorList>
    </citation>
    <scope>NUCLEOTIDE SEQUENCE [LARGE SCALE GENOMIC DNA]</scope>
    <source>
        <strain>168</strain>
    </source>
</reference>
<gene>
    <name type="primary">yhfI</name>
    <name type="ordered locus">BSU10240</name>
</gene>
<sequence>MKVTVIGCYGGFPAANEATSGYLFQSGDYSLLVDCGSAVLSKLFGYVPAEKLDAVVLSHYHHDHIADIGPLQFAKQVGSFLGKGEHTLPIYGHDADIEQFQKLTYKTHTKGIAYQPDQPLTAGPFTITFLKTIHPVTCYAMRITDGSHTVVYTADSSYQDSFIPFSKDADLLISECNFYADQDGTSAGHMNSLEAGRIAKEAGAGELLLTHLPHFGVHDNLRKEAKTVFNGEVNIAKSGFVWEG</sequence>
<comment type="cofactor">
    <cofactor evidence="1">
        <name>Zn(2+)</name>
        <dbReference type="ChEBI" id="CHEBI:29105"/>
    </cofactor>
    <text evidence="1">Binds 2 Zn(2+) ions per subunit.</text>
</comment>
<comment type="similarity">
    <text evidence="2">Belongs to the metallo-beta-lactamase superfamily.</text>
</comment>